<name>PYRB_SACS2</name>
<gene>
    <name evidence="1" type="primary">pyrB</name>
    <name type="ordered locus">SSO0614</name>
</gene>
<feature type="chain" id="PRO_0000113259" description="Aspartate carbamoyltransferase catalytic subunit">
    <location>
        <begin position="1"/>
        <end position="303"/>
    </location>
</feature>
<feature type="binding site" evidence="1">
    <location>
        <position position="51"/>
    </location>
    <ligand>
        <name>carbamoyl phosphate</name>
        <dbReference type="ChEBI" id="CHEBI:58228"/>
    </ligand>
</feature>
<feature type="binding site" evidence="1">
    <location>
        <position position="52"/>
    </location>
    <ligand>
        <name>carbamoyl phosphate</name>
        <dbReference type="ChEBI" id="CHEBI:58228"/>
    </ligand>
</feature>
<feature type="binding site" evidence="1">
    <location>
        <position position="80"/>
    </location>
    <ligand>
        <name>L-aspartate</name>
        <dbReference type="ChEBI" id="CHEBI:29991"/>
    </ligand>
</feature>
<feature type="binding site" evidence="1">
    <location>
        <position position="101"/>
    </location>
    <ligand>
        <name>carbamoyl phosphate</name>
        <dbReference type="ChEBI" id="CHEBI:58228"/>
    </ligand>
</feature>
<feature type="binding site" evidence="1">
    <location>
        <position position="129"/>
    </location>
    <ligand>
        <name>carbamoyl phosphate</name>
        <dbReference type="ChEBI" id="CHEBI:58228"/>
    </ligand>
</feature>
<feature type="binding site" evidence="1">
    <location>
        <position position="132"/>
    </location>
    <ligand>
        <name>carbamoyl phosphate</name>
        <dbReference type="ChEBI" id="CHEBI:58228"/>
    </ligand>
</feature>
<feature type="binding site" evidence="1">
    <location>
        <position position="162"/>
    </location>
    <ligand>
        <name>L-aspartate</name>
        <dbReference type="ChEBI" id="CHEBI:29991"/>
    </ligand>
</feature>
<feature type="binding site" evidence="1">
    <location>
        <position position="221"/>
    </location>
    <ligand>
        <name>L-aspartate</name>
        <dbReference type="ChEBI" id="CHEBI:29991"/>
    </ligand>
</feature>
<feature type="binding site" evidence="1">
    <location>
        <position position="260"/>
    </location>
    <ligand>
        <name>carbamoyl phosphate</name>
        <dbReference type="ChEBI" id="CHEBI:58228"/>
    </ligand>
</feature>
<feature type="binding site" evidence="1">
    <location>
        <position position="261"/>
    </location>
    <ligand>
        <name>carbamoyl phosphate</name>
        <dbReference type="ChEBI" id="CHEBI:58228"/>
    </ligand>
</feature>
<sequence length="303" mass="34738">MRLRHVVSSLDLTRDDYFRIFELADKFYDVKKLNYLSGKVVSLAFFEPSTRTAQSFHTAAIKLGADVIGFASEESTSIAKGENLADTIRMLNNYSNCIVMRHKFDGAALFASEISDIPIINAGDGKHEHPTQAVIDLYTVYKAFGEIDGRTFALLGDLKYARTVNSLLRALTRFKPKKVFLISPSQLKVRREILDELNYPVIETENPYDVIQEIDVLYVTRIQKERFVDEVEYEKVKESYVVDLKLVNMMKKDGIILHPLPRVTEIDRRVDKTVNAKYFYQASLAVPVRMALFYEVLGDREDD</sequence>
<accession>Q9UX08</accession>
<dbReference type="EC" id="2.1.3.2" evidence="1"/>
<dbReference type="EMBL" id="Y18930">
    <property type="protein sequence ID" value="CAB57686.1"/>
    <property type="molecule type" value="Genomic_DNA"/>
</dbReference>
<dbReference type="EMBL" id="AE006641">
    <property type="protein sequence ID" value="AAK40925.1"/>
    <property type="molecule type" value="Genomic_DNA"/>
</dbReference>
<dbReference type="PIR" id="F90208">
    <property type="entry name" value="F90208"/>
</dbReference>
<dbReference type="RefSeq" id="WP_009991143.1">
    <property type="nucleotide sequence ID" value="NC_002754.1"/>
</dbReference>
<dbReference type="SMR" id="Q9UX08"/>
<dbReference type="FunCoup" id="Q9UX08">
    <property type="interactions" value="270"/>
</dbReference>
<dbReference type="STRING" id="273057.SSO0614"/>
<dbReference type="PaxDb" id="273057-SSO0614"/>
<dbReference type="EnsemblBacteria" id="AAK40925">
    <property type="protein sequence ID" value="AAK40925"/>
    <property type="gene ID" value="SSO0614"/>
</dbReference>
<dbReference type="GeneID" id="44129616"/>
<dbReference type="KEGG" id="sso:SSO0614"/>
<dbReference type="PATRIC" id="fig|273057.12.peg.622"/>
<dbReference type="eggNOG" id="arCOG00911">
    <property type="taxonomic scope" value="Archaea"/>
</dbReference>
<dbReference type="HOGENOM" id="CLU_043846_1_2_2"/>
<dbReference type="InParanoid" id="Q9UX08"/>
<dbReference type="PhylomeDB" id="Q9UX08"/>
<dbReference type="UniPathway" id="UPA00070">
    <property type="reaction ID" value="UER00116"/>
</dbReference>
<dbReference type="Proteomes" id="UP000001974">
    <property type="component" value="Chromosome"/>
</dbReference>
<dbReference type="GO" id="GO:0005737">
    <property type="term" value="C:cytoplasm"/>
    <property type="evidence" value="ECO:0000318"/>
    <property type="project" value="GO_Central"/>
</dbReference>
<dbReference type="GO" id="GO:0016597">
    <property type="term" value="F:amino acid binding"/>
    <property type="evidence" value="ECO:0007669"/>
    <property type="project" value="InterPro"/>
</dbReference>
<dbReference type="GO" id="GO:0004070">
    <property type="term" value="F:aspartate carbamoyltransferase activity"/>
    <property type="evidence" value="ECO:0007669"/>
    <property type="project" value="UniProtKB-UniRule"/>
</dbReference>
<dbReference type="GO" id="GO:0006207">
    <property type="term" value="P:'de novo' pyrimidine nucleobase biosynthetic process"/>
    <property type="evidence" value="ECO:0007669"/>
    <property type="project" value="InterPro"/>
</dbReference>
<dbReference type="GO" id="GO:0044205">
    <property type="term" value="P:'de novo' UMP biosynthetic process"/>
    <property type="evidence" value="ECO:0007669"/>
    <property type="project" value="UniProtKB-UniRule"/>
</dbReference>
<dbReference type="GO" id="GO:0006541">
    <property type="term" value="P:glutamine metabolic process"/>
    <property type="evidence" value="ECO:0000318"/>
    <property type="project" value="GO_Central"/>
</dbReference>
<dbReference type="FunFam" id="3.40.50.1370:FF:000021">
    <property type="entry name" value="Aspartate carbamoyltransferase"/>
    <property type="match status" value="1"/>
</dbReference>
<dbReference type="Gene3D" id="3.40.50.1370">
    <property type="entry name" value="Aspartate/ornithine carbamoyltransferase"/>
    <property type="match status" value="2"/>
</dbReference>
<dbReference type="HAMAP" id="MF_00001">
    <property type="entry name" value="Asp_carb_tr"/>
    <property type="match status" value="1"/>
</dbReference>
<dbReference type="InterPro" id="IPR006132">
    <property type="entry name" value="Asp/Orn_carbamoyltranf_P-bd"/>
</dbReference>
<dbReference type="InterPro" id="IPR006130">
    <property type="entry name" value="Asp/Orn_carbamoylTrfase"/>
</dbReference>
<dbReference type="InterPro" id="IPR036901">
    <property type="entry name" value="Asp/Orn_carbamoylTrfase_sf"/>
</dbReference>
<dbReference type="InterPro" id="IPR002082">
    <property type="entry name" value="Asp_carbamoyltransf"/>
</dbReference>
<dbReference type="InterPro" id="IPR006131">
    <property type="entry name" value="Asp_carbamoyltransf_Asp/Orn-bd"/>
</dbReference>
<dbReference type="NCBIfam" id="TIGR00670">
    <property type="entry name" value="asp_carb_tr"/>
    <property type="match status" value="1"/>
</dbReference>
<dbReference type="NCBIfam" id="NF002032">
    <property type="entry name" value="PRK00856.1"/>
    <property type="match status" value="1"/>
</dbReference>
<dbReference type="PANTHER" id="PTHR45753:SF6">
    <property type="entry name" value="ASPARTATE CARBAMOYLTRANSFERASE"/>
    <property type="match status" value="1"/>
</dbReference>
<dbReference type="PANTHER" id="PTHR45753">
    <property type="entry name" value="ORNITHINE CARBAMOYLTRANSFERASE, MITOCHONDRIAL"/>
    <property type="match status" value="1"/>
</dbReference>
<dbReference type="Pfam" id="PF00185">
    <property type="entry name" value="OTCace"/>
    <property type="match status" value="1"/>
</dbReference>
<dbReference type="Pfam" id="PF02729">
    <property type="entry name" value="OTCace_N"/>
    <property type="match status" value="1"/>
</dbReference>
<dbReference type="PRINTS" id="PR00100">
    <property type="entry name" value="AOTCASE"/>
</dbReference>
<dbReference type="PRINTS" id="PR00101">
    <property type="entry name" value="ATCASE"/>
</dbReference>
<dbReference type="SUPFAM" id="SSF53671">
    <property type="entry name" value="Aspartate/ornithine carbamoyltransferase"/>
    <property type="match status" value="1"/>
</dbReference>
<dbReference type="PROSITE" id="PS00097">
    <property type="entry name" value="CARBAMOYLTRANSFERASE"/>
    <property type="match status" value="1"/>
</dbReference>
<reference key="1">
    <citation type="journal article" date="2000" name="Genome">
        <title>Gene content and organization of a 281-kbp contig from the genome of the extremely thermophilic archaeon, Sulfolobus solfataricus P2.</title>
        <authorList>
            <person name="Charlebois R.L."/>
            <person name="Singh R.K."/>
            <person name="Chan-Weiher C.C.-Y."/>
            <person name="Allard G."/>
            <person name="Chow C."/>
            <person name="Confalonieri F."/>
            <person name="Curtis B."/>
            <person name="Duguet M."/>
            <person name="Erauso G."/>
            <person name="Faguy D."/>
            <person name="Gaasterland T."/>
            <person name="Garrett R.A."/>
            <person name="Gordon P."/>
            <person name="Jeffries A.C."/>
            <person name="Kozera C."/>
            <person name="Kushwaha N."/>
            <person name="Lafleur E."/>
            <person name="Medina N."/>
            <person name="Peng X."/>
            <person name="Penny S.L."/>
            <person name="She Q."/>
            <person name="St Jean A."/>
            <person name="van der Oost J."/>
            <person name="Young F."/>
            <person name="Zivanovic Y."/>
            <person name="Doolittle W.F."/>
            <person name="Ragan M.A."/>
            <person name="Sensen C.W."/>
        </authorList>
    </citation>
    <scope>NUCLEOTIDE SEQUENCE [LARGE SCALE GENOMIC DNA]</scope>
    <source>
        <strain>ATCC 35092 / DSM 1617 / JCM 11322 / P2</strain>
    </source>
</reference>
<reference key="2">
    <citation type="journal article" date="2001" name="Proc. Natl. Acad. Sci. U.S.A.">
        <title>The complete genome of the crenarchaeon Sulfolobus solfataricus P2.</title>
        <authorList>
            <person name="She Q."/>
            <person name="Singh R.K."/>
            <person name="Confalonieri F."/>
            <person name="Zivanovic Y."/>
            <person name="Allard G."/>
            <person name="Awayez M.J."/>
            <person name="Chan-Weiher C.C.-Y."/>
            <person name="Clausen I.G."/>
            <person name="Curtis B.A."/>
            <person name="De Moors A."/>
            <person name="Erauso G."/>
            <person name="Fletcher C."/>
            <person name="Gordon P.M.K."/>
            <person name="Heikamp-de Jong I."/>
            <person name="Jeffries A.C."/>
            <person name="Kozera C.J."/>
            <person name="Medina N."/>
            <person name="Peng X."/>
            <person name="Thi-Ngoc H.P."/>
            <person name="Redder P."/>
            <person name="Schenk M.E."/>
            <person name="Theriault C."/>
            <person name="Tolstrup N."/>
            <person name="Charlebois R.L."/>
            <person name="Doolittle W.F."/>
            <person name="Duguet M."/>
            <person name="Gaasterland T."/>
            <person name="Garrett R.A."/>
            <person name="Ragan M.A."/>
            <person name="Sensen C.W."/>
            <person name="Van der Oost J."/>
        </authorList>
    </citation>
    <scope>NUCLEOTIDE SEQUENCE [LARGE SCALE GENOMIC DNA]</scope>
    <source>
        <strain>ATCC 35092 / DSM 1617 / JCM 11322 / P2</strain>
    </source>
</reference>
<proteinExistence type="inferred from homology"/>
<keyword id="KW-0665">Pyrimidine biosynthesis</keyword>
<keyword id="KW-1185">Reference proteome</keyword>
<keyword id="KW-0808">Transferase</keyword>
<evidence type="ECO:0000255" key="1">
    <source>
        <dbReference type="HAMAP-Rule" id="MF_00001"/>
    </source>
</evidence>
<evidence type="ECO:0000305" key="2"/>
<organism>
    <name type="scientific">Saccharolobus solfataricus (strain ATCC 35092 / DSM 1617 / JCM 11322 / P2)</name>
    <name type="common">Sulfolobus solfataricus</name>
    <dbReference type="NCBI Taxonomy" id="273057"/>
    <lineage>
        <taxon>Archaea</taxon>
        <taxon>Thermoproteota</taxon>
        <taxon>Thermoprotei</taxon>
        <taxon>Sulfolobales</taxon>
        <taxon>Sulfolobaceae</taxon>
        <taxon>Saccharolobus</taxon>
    </lineage>
</organism>
<comment type="function">
    <text evidence="1">Catalyzes the condensation of carbamoyl phosphate and aspartate to form carbamoyl aspartate and inorganic phosphate, the committed step in the de novo pyrimidine nucleotide biosynthesis pathway.</text>
</comment>
<comment type="catalytic activity">
    <reaction evidence="1">
        <text>carbamoyl phosphate + L-aspartate = N-carbamoyl-L-aspartate + phosphate + H(+)</text>
        <dbReference type="Rhea" id="RHEA:20013"/>
        <dbReference type="ChEBI" id="CHEBI:15378"/>
        <dbReference type="ChEBI" id="CHEBI:29991"/>
        <dbReference type="ChEBI" id="CHEBI:32814"/>
        <dbReference type="ChEBI" id="CHEBI:43474"/>
        <dbReference type="ChEBI" id="CHEBI:58228"/>
        <dbReference type="EC" id="2.1.3.2"/>
    </reaction>
</comment>
<comment type="pathway">
    <text evidence="1">Pyrimidine metabolism; UMP biosynthesis via de novo pathway; (S)-dihydroorotate from bicarbonate: step 2/3.</text>
</comment>
<comment type="subunit">
    <text evidence="1">Heterooligomer of catalytic and regulatory chains.</text>
</comment>
<comment type="similarity">
    <text evidence="1 2">Belongs to the aspartate/ornithine carbamoyltransferase superfamily. ATCase family.</text>
</comment>
<protein>
    <recommendedName>
        <fullName evidence="1">Aspartate carbamoyltransferase catalytic subunit</fullName>
        <ecNumber evidence="1">2.1.3.2</ecNumber>
    </recommendedName>
    <alternativeName>
        <fullName evidence="1">Aspartate transcarbamylase</fullName>
        <shortName evidence="1">ATCase</shortName>
    </alternativeName>
</protein>